<feature type="chain" id="PRO_0000193116" description="Long-chain-fatty-acid--CoA ligase 6">
    <location>
        <begin position="1"/>
        <end position="697"/>
    </location>
</feature>
<feature type="transmembrane region" description="Helical; Signal-anchor for type III membrane protein" evidence="4">
    <location>
        <begin position="25"/>
        <end position="45"/>
    </location>
</feature>
<feature type="topological domain" description="Cytoplasmic" evidence="4">
    <location>
        <begin position="46"/>
        <end position="697"/>
    </location>
</feature>
<feature type="splice variant" id="VSP_037824" description="In isoform 2." evidence="5">
    <original>M</original>
    <variation>MLTFFLVSGGSLWLFAEIALSLLEKM</variation>
    <location>
        <position position="1"/>
    </location>
</feature>
<feature type="sequence conflict" description="In Ref. 1; AAO38689." evidence="6" ref="1">
    <original>P</original>
    <variation>S</variation>
    <location>
        <position position="364"/>
    </location>
</feature>
<feature type="sequence conflict" description="In Ref. 1; AAO38689." evidence="6" ref="1">
    <original>E</original>
    <variation>G</variation>
    <location>
        <position position="680"/>
    </location>
</feature>
<name>ACSL6_MOUSE</name>
<reference key="1">
    <citation type="journal article" date="2003" name="Biochem. Biophys. Res. Commun.">
        <title>A novel murine long-chain acyl-CoA synthetase expressed in brain participates in neuronal cell proliferation.</title>
        <authorList>
            <person name="Kee H.J."/>
            <person name="Koh J.T."/>
            <person name="Yang S.Y."/>
            <person name="Lee Z.H."/>
            <person name="Baik Y.H."/>
            <person name="Kim K.K."/>
        </authorList>
    </citation>
    <scope>NUCLEOTIDE SEQUENCE [MRNA] (ISOFORM 2)</scope>
    <source>
        <strain>ICR</strain>
        <tissue>Brain</tissue>
    </source>
</reference>
<reference key="2">
    <citation type="journal article" date="2004" name="Genome Res.">
        <title>The status, quality, and expansion of the NIH full-length cDNA project: the Mammalian Gene Collection (MGC).</title>
        <authorList>
            <consortium name="The MGC Project Team"/>
        </authorList>
    </citation>
    <scope>NUCLEOTIDE SEQUENCE [LARGE SCALE MRNA] (ISOFORM 1)</scope>
    <source>
        <tissue>Retina</tissue>
    </source>
</reference>
<reference key="3">
    <citation type="journal article" date="2010" name="Cell">
        <title>A tissue-specific atlas of mouse protein phosphorylation and expression.</title>
        <authorList>
            <person name="Huttlin E.L."/>
            <person name="Jedrychowski M.P."/>
            <person name="Elias J.E."/>
            <person name="Goswami T."/>
            <person name="Rad R."/>
            <person name="Beausoleil S.A."/>
            <person name="Villen J."/>
            <person name="Haas W."/>
            <person name="Sowa M.E."/>
            <person name="Gygi S.P."/>
        </authorList>
    </citation>
    <scope>IDENTIFICATION BY MASS SPECTROMETRY [LARGE SCALE ANALYSIS]</scope>
    <source>
        <tissue>Brain</tissue>
        <tissue>Spleen</tissue>
        <tissue>Testis</tissue>
    </source>
</reference>
<protein>
    <recommendedName>
        <fullName evidence="6">Long-chain-fatty-acid--CoA ligase 6</fullName>
        <ecNumber evidence="2">6.2.1.3</ecNumber>
    </recommendedName>
    <alternativeName>
        <fullName evidence="6">Arachidonate--CoA ligase</fullName>
        <ecNumber evidence="2">6.2.1.15</ecNumber>
    </alternativeName>
    <alternativeName>
        <fullName>Long-chain acyl-CoA synthetase 6</fullName>
        <shortName>LACS 6</shortName>
    </alternativeName>
</protein>
<organism>
    <name type="scientific">Mus musculus</name>
    <name type="common">Mouse</name>
    <dbReference type="NCBI Taxonomy" id="10090"/>
    <lineage>
        <taxon>Eukaryota</taxon>
        <taxon>Metazoa</taxon>
        <taxon>Chordata</taxon>
        <taxon>Craniata</taxon>
        <taxon>Vertebrata</taxon>
        <taxon>Euteleostomi</taxon>
        <taxon>Mammalia</taxon>
        <taxon>Eutheria</taxon>
        <taxon>Euarchontoglires</taxon>
        <taxon>Glires</taxon>
        <taxon>Rodentia</taxon>
        <taxon>Myomorpha</taxon>
        <taxon>Muroidea</taxon>
        <taxon>Muridae</taxon>
        <taxon>Murinae</taxon>
        <taxon>Mus</taxon>
        <taxon>Mus</taxon>
    </lineage>
</organism>
<gene>
    <name type="primary">Acsl6</name>
    <name type="synonym">Facl6</name>
</gene>
<proteinExistence type="evidence at protein level"/>
<sequence>MQTQEILRILRLPELSDLGQFFRSLSATTLVSVGALAAVLAYWLTHRPKALQPPCNLLKQSEEVEDGGGARRSVIGGCTQLLTHYYDDARTMYQVFRRGLSISGNGPCLGFRKPEQPYQWLSYQEVAKRAEFLGSGLLQHDCKVGTEQFVGVFAQNRPEWIIAELACYTYSMVVVPLYDTLGPGSISYIINTADICTVIVDKPHKATLLLEHVERKETPGLKLVILMEPFEDALRERGKKCGVDIKSMQAIEDCGRENHHAPVPPRPDDLSIVCFTSGTTGNPKGAMLTHGNVVADFSGFLKVTEKVIFPRQDDVLISFLPLAHMFERVIQSVVYCHGGRVGFFQGDIRLLSDDMKALRPTIFPVVPRLLNRMYDKIFHQADTSLKRWLLEFAAKRKQAEVRSGIIRNNSIWDELFFNKIQASLGGHVRMIVTGAAPASPTVLGFLRAALGCQVYEGYGQTECTAGCTFTTPGDWTSGHVGAPLPCNHIKLVDAEELNYWTCKGEGEICVKGPNVFKGYLKDEDRTKEALDSDGWLHTGDIGKWLPEGTLKIIDRKKHIFKLAQGEYVAPEKIENIYIRSEPVAQIYVHGDSLKAFLVGIVVPDPEVMPSWAQKKGIEGTYQELCMKKELKKAILDDMVMLGKESGLHSFEQVKAIYIHCDMFSVQNGLLTPTLKAKRPELREYFKKQIEELYLVSV</sequence>
<comment type="function">
    <text evidence="1 2">Catalyzes the conversion of long-chain fatty acids to their active form acyl-CoA for both synthesis of cellular lipids, and degradation via beta-oxidation (By similarity). Plays an important role in fatty acid metabolism in brain and the acyl-CoAs produced may be utilized exclusively for the synthesis of the brain lipid (By similarity).</text>
</comment>
<comment type="catalytic activity">
    <reaction evidence="2">
        <text>a long-chain fatty acid + ATP + CoA = a long-chain fatty acyl-CoA + AMP + diphosphate</text>
        <dbReference type="Rhea" id="RHEA:15421"/>
        <dbReference type="ChEBI" id="CHEBI:30616"/>
        <dbReference type="ChEBI" id="CHEBI:33019"/>
        <dbReference type="ChEBI" id="CHEBI:57287"/>
        <dbReference type="ChEBI" id="CHEBI:57560"/>
        <dbReference type="ChEBI" id="CHEBI:83139"/>
        <dbReference type="ChEBI" id="CHEBI:456215"/>
        <dbReference type="EC" id="6.2.1.3"/>
    </reaction>
    <physiologicalReaction direction="left-to-right" evidence="2">
        <dbReference type="Rhea" id="RHEA:15422"/>
    </physiologicalReaction>
</comment>
<comment type="catalytic activity">
    <reaction evidence="2">
        <text>(5Z,8Z,11Z,14Z)-eicosatetraenoate + ATP + CoA = (5Z,8Z,11Z,14Z)-eicosatetraenoyl-CoA + AMP + diphosphate</text>
        <dbReference type="Rhea" id="RHEA:19713"/>
        <dbReference type="ChEBI" id="CHEBI:30616"/>
        <dbReference type="ChEBI" id="CHEBI:32395"/>
        <dbReference type="ChEBI" id="CHEBI:33019"/>
        <dbReference type="ChEBI" id="CHEBI:57287"/>
        <dbReference type="ChEBI" id="CHEBI:57368"/>
        <dbReference type="ChEBI" id="CHEBI:456215"/>
        <dbReference type="EC" id="6.2.1.15"/>
    </reaction>
    <physiologicalReaction direction="left-to-right" evidence="2">
        <dbReference type="Rhea" id="RHEA:19714"/>
    </physiologicalReaction>
</comment>
<comment type="catalytic activity">
    <reaction evidence="2">
        <text>15-hydroxy-(5Z,8Z,11Z,13E)-eicosatetraenoate + ATP + CoA = 15-hydroxy-(5Z,8Z,11Z,13E)-eicosatetraenoyl-CoA + AMP + diphosphate</text>
        <dbReference type="Rhea" id="RHEA:52116"/>
        <dbReference type="ChEBI" id="CHEBI:30616"/>
        <dbReference type="ChEBI" id="CHEBI:33019"/>
        <dbReference type="ChEBI" id="CHEBI:57287"/>
        <dbReference type="ChEBI" id="CHEBI:78832"/>
        <dbReference type="ChEBI" id="CHEBI:136409"/>
        <dbReference type="ChEBI" id="CHEBI:456215"/>
    </reaction>
    <physiologicalReaction direction="left-to-right" evidence="2">
        <dbReference type="Rhea" id="RHEA:52117"/>
    </physiologicalReaction>
</comment>
<comment type="catalytic activity">
    <reaction evidence="2">
        <text>12-hydroxy-(5Z,8Z,10E,14Z)-eicosatetraenoate + ATP + CoA = 12-hydroxy-(5Z,8Z,10E,14Z)-eicosatetraenoyl-CoA + AMP + diphosphate</text>
        <dbReference type="Rhea" id="RHEA:52112"/>
        <dbReference type="ChEBI" id="CHEBI:30616"/>
        <dbReference type="ChEBI" id="CHEBI:33019"/>
        <dbReference type="ChEBI" id="CHEBI:57287"/>
        <dbReference type="ChEBI" id="CHEBI:90718"/>
        <dbReference type="ChEBI" id="CHEBI:136408"/>
        <dbReference type="ChEBI" id="CHEBI:456215"/>
    </reaction>
    <physiologicalReaction direction="left-to-right" evidence="2">
        <dbReference type="Rhea" id="RHEA:52113"/>
    </physiologicalReaction>
</comment>
<comment type="catalytic activity">
    <reaction evidence="2">
        <text>5-hydroxy-(6E,8Z,11Z,14Z)-eicosatetraenoate + ATP + CoA = 5-hydroxy-(6E,8Z,11Z,14Z)-eicosatetraenoyl-CoA + AMP + diphosphate</text>
        <dbReference type="Rhea" id="RHEA:52108"/>
        <dbReference type="ChEBI" id="CHEBI:30616"/>
        <dbReference type="ChEBI" id="CHEBI:33019"/>
        <dbReference type="ChEBI" id="CHEBI:57287"/>
        <dbReference type="ChEBI" id="CHEBI:65341"/>
        <dbReference type="ChEBI" id="CHEBI:136407"/>
        <dbReference type="ChEBI" id="CHEBI:456215"/>
    </reaction>
    <physiologicalReaction direction="left-to-right" evidence="2">
        <dbReference type="Rhea" id="RHEA:52109"/>
    </physiologicalReaction>
</comment>
<comment type="catalytic activity">
    <reaction evidence="3">
        <text>hexadecanoate + ATP + CoA = hexadecanoyl-CoA + AMP + diphosphate</text>
        <dbReference type="Rhea" id="RHEA:30751"/>
        <dbReference type="ChEBI" id="CHEBI:7896"/>
        <dbReference type="ChEBI" id="CHEBI:30616"/>
        <dbReference type="ChEBI" id="CHEBI:33019"/>
        <dbReference type="ChEBI" id="CHEBI:57287"/>
        <dbReference type="ChEBI" id="CHEBI:57379"/>
        <dbReference type="ChEBI" id="CHEBI:456215"/>
    </reaction>
    <physiologicalReaction direction="left-to-right" evidence="3">
        <dbReference type="Rhea" id="RHEA:30752"/>
    </physiologicalReaction>
</comment>
<comment type="catalytic activity">
    <reaction evidence="3">
        <text>(E)-hexadec-2-enoate + ATP + CoA = (2E)-hexadecenoyl-CoA + AMP + diphosphate</text>
        <dbReference type="Rhea" id="RHEA:36139"/>
        <dbReference type="ChEBI" id="CHEBI:30616"/>
        <dbReference type="ChEBI" id="CHEBI:33019"/>
        <dbReference type="ChEBI" id="CHEBI:57287"/>
        <dbReference type="ChEBI" id="CHEBI:61526"/>
        <dbReference type="ChEBI" id="CHEBI:72745"/>
        <dbReference type="ChEBI" id="CHEBI:456215"/>
    </reaction>
    <physiologicalReaction direction="left-to-right" evidence="3">
        <dbReference type="Rhea" id="RHEA:36140"/>
    </physiologicalReaction>
</comment>
<comment type="cofactor">
    <cofactor evidence="1">
        <name>Mg(2+)</name>
        <dbReference type="ChEBI" id="CHEBI:18420"/>
    </cofactor>
</comment>
<comment type="subcellular location">
    <subcellularLocation>
        <location evidence="1">Mitochondrion outer membrane</location>
        <topology evidence="1">Single-pass type III membrane protein</topology>
    </subcellularLocation>
    <subcellularLocation>
        <location evidence="1">Peroxisome membrane</location>
        <topology evidence="1">Single-pass type III membrane protein</topology>
    </subcellularLocation>
    <subcellularLocation>
        <location evidence="1">Microsome membrane</location>
        <topology evidence="1">Single-pass type III membrane protein</topology>
    </subcellularLocation>
    <subcellularLocation>
        <location evidence="3">Endoplasmic reticulum membrane</location>
        <topology evidence="1">Single-pass type III membrane protein</topology>
    </subcellularLocation>
</comment>
<comment type="alternative products">
    <event type="alternative splicing"/>
    <isoform>
        <id>Q91WC3-1</id>
        <name>1</name>
        <sequence type="displayed"/>
    </isoform>
    <isoform>
        <id>Q91WC3-2</id>
        <name>2</name>
        <sequence type="described" ref="VSP_037824"/>
    </isoform>
</comment>
<comment type="similarity">
    <text evidence="6">Belongs to the ATP-dependent AMP-binding enzyme family.</text>
</comment>
<accession>Q91WC3</accession>
<accession>Q80ZF1</accession>
<keyword id="KW-0025">Alternative splicing</keyword>
<keyword id="KW-0067">ATP-binding</keyword>
<keyword id="KW-0256">Endoplasmic reticulum</keyword>
<keyword id="KW-0276">Fatty acid metabolism</keyword>
<keyword id="KW-0436">Ligase</keyword>
<keyword id="KW-0443">Lipid metabolism</keyword>
<keyword id="KW-0460">Magnesium</keyword>
<keyword id="KW-0472">Membrane</keyword>
<keyword id="KW-0492">Microsome</keyword>
<keyword id="KW-0496">Mitochondrion</keyword>
<keyword id="KW-1000">Mitochondrion outer membrane</keyword>
<keyword id="KW-0547">Nucleotide-binding</keyword>
<keyword id="KW-0576">Peroxisome</keyword>
<keyword id="KW-1185">Reference proteome</keyword>
<keyword id="KW-0735">Signal-anchor</keyword>
<keyword id="KW-0812">Transmembrane</keyword>
<keyword id="KW-1133">Transmembrane helix</keyword>
<dbReference type="EC" id="6.2.1.3" evidence="2"/>
<dbReference type="EC" id="6.2.1.15" evidence="2"/>
<dbReference type="EMBL" id="AY167035">
    <property type="protein sequence ID" value="AAO38689.1"/>
    <property type="molecule type" value="mRNA"/>
</dbReference>
<dbReference type="EMBL" id="BC016114">
    <property type="protein sequence ID" value="AAH16114.1"/>
    <property type="molecule type" value="mRNA"/>
</dbReference>
<dbReference type="CCDS" id="CCDS24695.1">
    <molecule id="Q91WC3-2"/>
</dbReference>
<dbReference type="CCDS" id="CCDS24696.1">
    <molecule id="Q91WC3-1"/>
</dbReference>
<dbReference type="RefSeq" id="NP_001028770.1">
    <molecule id="Q91WC3-1"/>
    <property type="nucleotide sequence ID" value="NM_001033598.1"/>
</dbReference>
<dbReference type="RefSeq" id="NP_659072.3">
    <molecule id="Q91WC3-2"/>
    <property type="nucleotide sequence ID" value="NM_144823.4"/>
</dbReference>
<dbReference type="RefSeq" id="XP_006532906.1">
    <molecule id="Q91WC3-1"/>
    <property type="nucleotide sequence ID" value="XM_006532843.2"/>
</dbReference>
<dbReference type="RefSeq" id="XP_006532907.1">
    <molecule id="Q91WC3-1"/>
    <property type="nucleotide sequence ID" value="XM_006532844.1"/>
</dbReference>
<dbReference type="RefSeq" id="XP_036012431.1">
    <molecule id="Q91WC3-1"/>
    <property type="nucleotide sequence ID" value="XM_036156538.1"/>
</dbReference>
<dbReference type="SMR" id="Q91WC3"/>
<dbReference type="BioGRID" id="229776">
    <property type="interactions" value="11"/>
</dbReference>
<dbReference type="FunCoup" id="Q91WC3">
    <property type="interactions" value="2102"/>
</dbReference>
<dbReference type="IntAct" id="Q91WC3">
    <property type="interactions" value="2"/>
</dbReference>
<dbReference type="MINT" id="Q91WC3"/>
<dbReference type="STRING" id="10090.ENSMUSP00000104533"/>
<dbReference type="GlyGen" id="Q91WC3">
    <property type="glycosylation" value="1 site, 1 O-linked glycan (1 site)"/>
</dbReference>
<dbReference type="iPTMnet" id="Q91WC3"/>
<dbReference type="MetOSite" id="Q91WC3"/>
<dbReference type="PhosphoSitePlus" id="Q91WC3"/>
<dbReference type="SwissPalm" id="Q91WC3"/>
<dbReference type="jPOST" id="Q91WC3"/>
<dbReference type="PaxDb" id="10090-ENSMUSP00000104533"/>
<dbReference type="ProteomicsDB" id="285708">
    <molecule id="Q91WC3-1"/>
</dbReference>
<dbReference type="ProteomicsDB" id="285709">
    <molecule id="Q91WC3-2"/>
</dbReference>
<dbReference type="DNASU" id="216739"/>
<dbReference type="Ensembl" id="ENSMUST00000072178.11">
    <molecule id="Q91WC3-1"/>
    <property type="protein sequence ID" value="ENSMUSP00000072040.5"/>
    <property type="gene ID" value="ENSMUSG00000020333.18"/>
</dbReference>
<dbReference type="Ensembl" id="ENSMUST00000093106.12">
    <molecule id="Q91WC3-1"/>
    <property type="protein sequence ID" value="ENSMUSP00000090795.6"/>
    <property type="gene ID" value="ENSMUSG00000020333.18"/>
</dbReference>
<dbReference type="Ensembl" id="ENSMUST00000094194.10">
    <molecule id="Q91WC3-1"/>
    <property type="protein sequence ID" value="ENSMUSP00000091746.4"/>
    <property type="gene ID" value="ENSMUSG00000020333.18"/>
</dbReference>
<dbReference type="Ensembl" id="ENSMUST00000108905.10">
    <molecule id="Q91WC3-2"/>
    <property type="protein sequence ID" value="ENSMUSP00000104533.4"/>
    <property type="gene ID" value="ENSMUSG00000020333.18"/>
</dbReference>
<dbReference type="GeneID" id="216739"/>
<dbReference type="KEGG" id="mmu:216739"/>
<dbReference type="UCSC" id="uc007ixo.1">
    <molecule id="Q91WC3-1"/>
    <property type="organism name" value="mouse"/>
</dbReference>
<dbReference type="AGR" id="MGI:894291"/>
<dbReference type="CTD" id="23305"/>
<dbReference type="MGI" id="MGI:894291">
    <property type="gene designation" value="Acsl6"/>
</dbReference>
<dbReference type="VEuPathDB" id="HostDB:ENSMUSG00000020333"/>
<dbReference type="eggNOG" id="KOG1256">
    <property type="taxonomic scope" value="Eukaryota"/>
</dbReference>
<dbReference type="GeneTree" id="ENSGT00940000162308"/>
<dbReference type="InParanoid" id="Q91WC3"/>
<dbReference type="OMA" id="KCPIVEH"/>
<dbReference type="OrthoDB" id="1700726at2759"/>
<dbReference type="PhylomeDB" id="Q91WC3"/>
<dbReference type="BRENDA" id="6.2.1.3">
    <property type="organism ID" value="3474"/>
</dbReference>
<dbReference type="Reactome" id="R-MMU-75876">
    <property type="pathway name" value="Synthesis of very long-chain fatty acyl-CoAs"/>
</dbReference>
<dbReference type="BioGRID-ORCS" id="216739">
    <property type="hits" value="4 hits in 81 CRISPR screens"/>
</dbReference>
<dbReference type="CD-CODE" id="CE726F99">
    <property type="entry name" value="Postsynaptic density"/>
</dbReference>
<dbReference type="ChiTaRS" id="Acsl6">
    <property type="organism name" value="mouse"/>
</dbReference>
<dbReference type="PRO" id="PR:Q91WC3"/>
<dbReference type="Proteomes" id="UP000000589">
    <property type="component" value="Chromosome 11"/>
</dbReference>
<dbReference type="RNAct" id="Q91WC3">
    <property type="molecule type" value="protein"/>
</dbReference>
<dbReference type="Bgee" id="ENSMUSG00000020333">
    <property type="expression patterns" value="Expressed in olfactory epithelium and 157 other cell types or tissues"/>
</dbReference>
<dbReference type="ExpressionAtlas" id="Q91WC3">
    <property type="expression patterns" value="baseline and differential"/>
</dbReference>
<dbReference type="GO" id="GO:0005783">
    <property type="term" value="C:endoplasmic reticulum"/>
    <property type="evidence" value="ECO:0000250"/>
    <property type="project" value="UniProtKB"/>
</dbReference>
<dbReference type="GO" id="GO:0005789">
    <property type="term" value="C:endoplasmic reticulum membrane"/>
    <property type="evidence" value="ECO:0007669"/>
    <property type="project" value="UniProtKB-SubCell"/>
</dbReference>
<dbReference type="GO" id="GO:0005741">
    <property type="term" value="C:mitochondrial outer membrane"/>
    <property type="evidence" value="ECO:0007669"/>
    <property type="project" value="UniProtKB-SubCell"/>
</dbReference>
<dbReference type="GO" id="GO:0005739">
    <property type="term" value="C:mitochondrion"/>
    <property type="evidence" value="ECO:0007005"/>
    <property type="project" value="MGI"/>
</dbReference>
<dbReference type="GO" id="GO:0005778">
    <property type="term" value="C:peroxisomal membrane"/>
    <property type="evidence" value="ECO:0007669"/>
    <property type="project" value="UniProtKB-SubCell"/>
</dbReference>
<dbReference type="GO" id="GO:0047676">
    <property type="term" value="F:arachidonate-CoA ligase activity"/>
    <property type="evidence" value="ECO:0000250"/>
    <property type="project" value="UniProtKB"/>
</dbReference>
<dbReference type="GO" id="GO:0005524">
    <property type="term" value="F:ATP binding"/>
    <property type="evidence" value="ECO:0007669"/>
    <property type="project" value="UniProtKB-KW"/>
</dbReference>
<dbReference type="GO" id="GO:0004467">
    <property type="term" value="F:long-chain fatty acid-CoA ligase activity"/>
    <property type="evidence" value="ECO:0000314"/>
    <property type="project" value="MGI"/>
</dbReference>
<dbReference type="GO" id="GO:0042803">
    <property type="term" value="F:protein homodimerization activity"/>
    <property type="evidence" value="ECO:0007669"/>
    <property type="project" value="Ensembl"/>
</dbReference>
<dbReference type="GO" id="GO:0007405">
    <property type="term" value="P:neuroblast proliferation"/>
    <property type="evidence" value="ECO:0000314"/>
    <property type="project" value="MGI"/>
</dbReference>
<dbReference type="CDD" id="cd05927">
    <property type="entry name" value="LC-FACS_euk"/>
    <property type="match status" value="1"/>
</dbReference>
<dbReference type="FunFam" id="3.40.50.12780:FF:000006">
    <property type="entry name" value="long-chain-fatty-acid--CoA ligase 6 isoform X2"/>
    <property type="match status" value="1"/>
</dbReference>
<dbReference type="Gene3D" id="3.40.50.12780">
    <property type="entry name" value="N-terminal domain of ligase-like"/>
    <property type="match status" value="1"/>
</dbReference>
<dbReference type="InterPro" id="IPR020845">
    <property type="entry name" value="AMP-binding_CS"/>
</dbReference>
<dbReference type="InterPro" id="IPR000873">
    <property type="entry name" value="AMP-dep_synth/lig_dom"/>
</dbReference>
<dbReference type="InterPro" id="IPR042099">
    <property type="entry name" value="ANL_N_sf"/>
</dbReference>
<dbReference type="InterPro" id="IPR045311">
    <property type="entry name" value="LC-FACS_euk"/>
</dbReference>
<dbReference type="PANTHER" id="PTHR43272">
    <property type="entry name" value="LONG-CHAIN-FATTY-ACID--COA LIGASE"/>
    <property type="match status" value="1"/>
</dbReference>
<dbReference type="PANTHER" id="PTHR43272:SF54">
    <property type="entry name" value="LONG-CHAIN-FATTY-ACID--COA LIGASE 6"/>
    <property type="match status" value="1"/>
</dbReference>
<dbReference type="Pfam" id="PF00501">
    <property type="entry name" value="AMP-binding"/>
    <property type="match status" value="1"/>
</dbReference>
<dbReference type="SUPFAM" id="SSF56801">
    <property type="entry name" value="Acetyl-CoA synthetase-like"/>
    <property type="match status" value="1"/>
</dbReference>
<dbReference type="PROSITE" id="PS00455">
    <property type="entry name" value="AMP_BINDING"/>
    <property type="match status" value="1"/>
</dbReference>
<evidence type="ECO:0000250" key="1"/>
<evidence type="ECO:0000250" key="2">
    <source>
        <dbReference type="UniProtKB" id="P33124"/>
    </source>
</evidence>
<evidence type="ECO:0000250" key="3">
    <source>
        <dbReference type="UniProtKB" id="Q9UKU0"/>
    </source>
</evidence>
<evidence type="ECO:0000255" key="4"/>
<evidence type="ECO:0000303" key="5">
    <source>
    </source>
</evidence>
<evidence type="ECO:0000305" key="6"/>